<dbReference type="EC" id="2.4.2.7" evidence="1"/>
<dbReference type="EMBL" id="CP001089">
    <property type="protein sequence ID" value="ACD94807.1"/>
    <property type="molecule type" value="Genomic_DNA"/>
</dbReference>
<dbReference type="RefSeq" id="WP_012469157.1">
    <property type="nucleotide sequence ID" value="NC_010814.1"/>
</dbReference>
<dbReference type="SMR" id="B3E683"/>
<dbReference type="STRING" id="398767.Glov_1084"/>
<dbReference type="KEGG" id="glo:Glov_1084"/>
<dbReference type="eggNOG" id="COG0503">
    <property type="taxonomic scope" value="Bacteria"/>
</dbReference>
<dbReference type="HOGENOM" id="CLU_063339_3_0_7"/>
<dbReference type="OrthoDB" id="9803963at2"/>
<dbReference type="UniPathway" id="UPA00588">
    <property type="reaction ID" value="UER00646"/>
</dbReference>
<dbReference type="Proteomes" id="UP000002420">
    <property type="component" value="Chromosome"/>
</dbReference>
<dbReference type="GO" id="GO:0005737">
    <property type="term" value="C:cytoplasm"/>
    <property type="evidence" value="ECO:0007669"/>
    <property type="project" value="UniProtKB-SubCell"/>
</dbReference>
<dbReference type="GO" id="GO:0002055">
    <property type="term" value="F:adenine binding"/>
    <property type="evidence" value="ECO:0007669"/>
    <property type="project" value="TreeGrafter"/>
</dbReference>
<dbReference type="GO" id="GO:0003999">
    <property type="term" value="F:adenine phosphoribosyltransferase activity"/>
    <property type="evidence" value="ECO:0007669"/>
    <property type="project" value="UniProtKB-UniRule"/>
</dbReference>
<dbReference type="GO" id="GO:0016208">
    <property type="term" value="F:AMP binding"/>
    <property type="evidence" value="ECO:0007669"/>
    <property type="project" value="TreeGrafter"/>
</dbReference>
<dbReference type="GO" id="GO:0006168">
    <property type="term" value="P:adenine salvage"/>
    <property type="evidence" value="ECO:0007669"/>
    <property type="project" value="InterPro"/>
</dbReference>
<dbReference type="GO" id="GO:0044209">
    <property type="term" value="P:AMP salvage"/>
    <property type="evidence" value="ECO:0007669"/>
    <property type="project" value="UniProtKB-UniRule"/>
</dbReference>
<dbReference type="GO" id="GO:0006166">
    <property type="term" value="P:purine ribonucleoside salvage"/>
    <property type="evidence" value="ECO:0007669"/>
    <property type="project" value="UniProtKB-KW"/>
</dbReference>
<dbReference type="CDD" id="cd06223">
    <property type="entry name" value="PRTases_typeI"/>
    <property type="match status" value="1"/>
</dbReference>
<dbReference type="FunFam" id="3.40.50.2020:FF:000004">
    <property type="entry name" value="Adenine phosphoribosyltransferase"/>
    <property type="match status" value="1"/>
</dbReference>
<dbReference type="Gene3D" id="3.40.50.2020">
    <property type="match status" value="1"/>
</dbReference>
<dbReference type="HAMAP" id="MF_00004">
    <property type="entry name" value="Aden_phosphoribosyltr"/>
    <property type="match status" value="1"/>
</dbReference>
<dbReference type="InterPro" id="IPR005764">
    <property type="entry name" value="Ade_phspho_trans"/>
</dbReference>
<dbReference type="InterPro" id="IPR000836">
    <property type="entry name" value="PRibTrfase_dom"/>
</dbReference>
<dbReference type="InterPro" id="IPR029057">
    <property type="entry name" value="PRTase-like"/>
</dbReference>
<dbReference type="InterPro" id="IPR050054">
    <property type="entry name" value="UPRTase/APRTase"/>
</dbReference>
<dbReference type="NCBIfam" id="TIGR01090">
    <property type="entry name" value="apt"/>
    <property type="match status" value="1"/>
</dbReference>
<dbReference type="NCBIfam" id="NF002634">
    <property type="entry name" value="PRK02304.1-3"/>
    <property type="match status" value="1"/>
</dbReference>
<dbReference type="NCBIfam" id="NF002636">
    <property type="entry name" value="PRK02304.1-5"/>
    <property type="match status" value="1"/>
</dbReference>
<dbReference type="PANTHER" id="PTHR32315">
    <property type="entry name" value="ADENINE PHOSPHORIBOSYLTRANSFERASE"/>
    <property type="match status" value="1"/>
</dbReference>
<dbReference type="PANTHER" id="PTHR32315:SF3">
    <property type="entry name" value="ADENINE PHOSPHORIBOSYLTRANSFERASE"/>
    <property type="match status" value="1"/>
</dbReference>
<dbReference type="Pfam" id="PF00156">
    <property type="entry name" value="Pribosyltran"/>
    <property type="match status" value="1"/>
</dbReference>
<dbReference type="SUPFAM" id="SSF53271">
    <property type="entry name" value="PRTase-like"/>
    <property type="match status" value="1"/>
</dbReference>
<organism>
    <name type="scientific">Trichlorobacter lovleyi (strain ATCC BAA-1151 / DSM 17278 / SZ)</name>
    <name type="common">Geobacter lovleyi</name>
    <dbReference type="NCBI Taxonomy" id="398767"/>
    <lineage>
        <taxon>Bacteria</taxon>
        <taxon>Pseudomonadati</taxon>
        <taxon>Thermodesulfobacteriota</taxon>
        <taxon>Desulfuromonadia</taxon>
        <taxon>Geobacterales</taxon>
        <taxon>Geobacteraceae</taxon>
        <taxon>Trichlorobacter</taxon>
    </lineage>
</organism>
<sequence length="171" mass="18998">MEDLKLTIRDIPDFPKKGIIFKDITTLLQDAKSFTRMIDMIANRYIGQRIDKVVGVEARGFLIGAALAYRLGAGVVLVRKPGKLPSETFSKTYDLEYGTDTLEIHKDAIKPGEKILIADDLLATGGTMAAVVDMVTNMQGEIVECCFMTELTFLDGRKKLPEGKVYSLMQF</sequence>
<evidence type="ECO:0000255" key="1">
    <source>
        <dbReference type="HAMAP-Rule" id="MF_00004"/>
    </source>
</evidence>
<reference key="1">
    <citation type="submission" date="2008-05" db="EMBL/GenBank/DDBJ databases">
        <title>Complete sequence of chromosome of Geobacter lovleyi SZ.</title>
        <authorList>
            <consortium name="US DOE Joint Genome Institute"/>
            <person name="Lucas S."/>
            <person name="Copeland A."/>
            <person name="Lapidus A."/>
            <person name="Glavina del Rio T."/>
            <person name="Dalin E."/>
            <person name="Tice H."/>
            <person name="Bruce D."/>
            <person name="Goodwin L."/>
            <person name="Pitluck S."/>
            <person name="Chertkov O."/>
            <person name="Meincke L."/>
            <person name="Brettin T."/>
            <person name="Detter J.C."/>
            <person name="Han C."/>
            <person name="Tapia R."/>
            <person name="Kuske C.R."/>
            <person name="Schmutz J."/>
            <person name="Larimer F."/>
            <person name="Land M."/>
            <person name="Hauser L."/>
            <person name="Kyrpides N."/>
            <person name="Mikhailova N."/>
            <person name="Sung Y."/>
            <person name="Fletcher K.E."/>
            <person name="Ritalahti K.M."/>
            <person name="Loeffler F.E."/>
            <person name="Richardson P."/>
        </authorList>
    </citation>
    <scope>NUCLEOTIDE SEQUENCE [LARGE SCALE GENOMIC DNA]</scope>
    <source>
        <strain>ATCC BAA-1151 / DSM 17278 / SZ</strain>
    </source>
</reference>
<keyword id="KW-0963">Cytoplasm</keyword>
<keyword id="KW-0328">Glycosyltransferase</keyword>
<keyword id="KW-0660">Purine salvage</keyword>
<keyword id="KW-1185">Reference proteome</keyword>
<keyword id="KW-0808">Transferase</keyword>
<feature type="chain" id="PRO_1000116244" description="Adenine phosphoribosyltransferase">
    <location>
        <begin position="1"/>
        <end position="171"/>
    </location>
</feature>
<gene>
    <name evidence="1" type="primary">apt</name>
    <name type="ordered locus">Glov_1084</name>
</gene>
<protein>
    <recommendedName>
        <fullName evidence="1">Adenine phosphoribosyltransferase</fullName>
        <shortName evidence="1">APRT</shortName>
        <ecNumber evidence="1">2.4.2.7</ecNumber>
    </recommendedName>
</protein>
<proteinExistence type="inferred from homology"/>
<name>APT_TRIL1</name>
<comment type="function">
    <text evidence="1">Catalyzes a salvage reaction resulting in the formation of AMP, that is energically less costly than de novo synthesis.</text>
</comment>
<comment type="catalytic activity">
    <reaction evidence="1">
        <text>AMP + diphosphate = 5-phospho-alpha-D-ribose 1-diphosphate + adenine</text>
        <dbReference type="Rhea" id="RHEA:16609"/>
        <dbReference type="ChEBI" id="CHEBI:16708"/>
        <dbReference type="ChEBI" id="CHEBI:33019"/>
        <dbReference type="ChEBI" id="CHEBI:58017"/>
        <dbReference type="ChEBI" id="CHEBI:456215"/>
        <dbReference type="EC" id="2.4.2.7"/>
    </reaction>
</comment>
<comment type="pathway">
    <text evidence="1">Purine metabolism; AMP biosynthesis via salvage pathway; AMP from adenine: step 1/1.</text>
</comment>
<comment type="subunit">
    <text evidence="1">Homodimer.</text>
</comment>
<comment type="subcellular location">
    <subcellularLocation>
        <location evidence="1">Cytoplasm</location>
    </subcellularLocation>
</comment>
<comment type="similarity">
    <text evidence="1">Belongs to the purine/pyrimidine phosphoribosyltransferase family.</text>
</comment>
<accession>B3E683</accession>